<organism>
    <name type="scientific">Homo sapiens</name>
    <name type="common">Human</name>
    <dbReference type="NCBI Taxonomy" id="9606"/>
    <lineage>
        <taxon>Eukaryota</taxon>
        <taxon>Metazoa</taxon>
        <taxon>Chordata</taxon>
        <taxon>Craniata</taxon>
        <taxon>Vertebrata</taxon>
        <taxon>Euteleostomi</taxon>
        <taxon>Mammalia</taxon>
        <taxon>Eutheria</taxon>
        <taxon>Euarchontoglires</taxon>
        <taxon>Primates</taxon>
        <taxon>Haplorrhini</taxon>
        <taxon>Catarrhini</taxon>
        <taxon>Hominidae</taxon>
        <taxon>Homo</taxon>
    </lineage>
</organism>
<sequence length="657" mass="74975">MGEEDYYLELCERPVQFEKANPVNCVFFDEANKQVFAVRSGGATGVVVKGPDDRNPISFRMDDKGEVKCIKFSLENKILAVQRTSKTVDFCNFIPDNSQLEYTQECKTKNANILGFCWTSSTEIVFITDQGIEFYQVLPEKRSLKLLKSHNLNVNWYMYCPESAVILLSTTVLENVLQPFHFRAGTMSKLPKFEIELPAAPKSTKPSLSERDIAMATIYGQLYVLFLRHHSRTSNSTGAEVVLYHLPREGACKKMHILKLNRTGKFALNVVDNLVVVHHQDTETSVIFDIKLRGEFDGSVTFHHPVLPARSIQPYQIPITGPAAVTSQSPVPCKLYSSSWIVFQPDIIISASQGYLWNLQVKLEPIVNLLPDKGRLMDFLLQRKECKMVILSVCSQMLSESDRASLPVIATVFDKLNHEYKKYLDAEQSYAMAVEAGQSRSSPLLKRPVRTQAVLDQSDVYTHVLSAFVEKKEMPHKFVIAVLMEYIRSLNQFQIAVQHYLHELVIKTLVQHNLFYMLHQFLQYHVLSDSKPLACLLLSLESFYPPAHQLSLDMLKRLSTANDEIVEVLLSKHQVLAALRFIRGIGGHDNISARKFLDAAKQTEDNMLFYTIFRFFEQRNQRLRGSPNFTPGEHCEEHVAFFKQIFGDQALMRPTTF</sequence>
<evidence type="ECO:0000269" key="1">
    <source>
    </source>
</evidence>
<evidence type="ECO:0000269" key="2">
    <source>
    </source>
</evidence>
<evidence type="ECO:0000303" key="3">
    <source>
    </source>
</evidence>
<evidence type="ECO:0000305" key="4"/>
<evidence type="ECO:0000312" key="5">
    <source>
        <dbReference type="HGNC" id="HGNC:24326"/>
    </source>
</evidence>
<name>RMC1_HUMAN</name>
<reference key="1">
    <citation type="journal article" date="2004" name="Nat. Genet.">
        <title>Complete sequencing and characterization of 21,243 full-length human cDNAs.</title>
        <authorList>
            <person name="Ota T."/>
            <person name="Suzuki Y."/>
            <person name="Nishikawa T."/>
            <person name="Otsuki T."/>
            <person name="Sugiyama T."/>
            <person name="Irie R."/>
            <person name="Wakamatsu A."/>
            <person name="Hayashi K."/>
            <person name="Sato H."/>
            <person name="Nagai K."/>
            <person name="Kimura K."/>
            <person name="Makita H."/>
            <person name="Sekine M."/>
            <person name="Obayashi M."/>
            <person name="Nishi T."/>
            <person name="Shibahara T."/>
            <person name="Tanaka T."/>
            <person name="Ishii S."/>
            <person name="Yamamoto J."/>
            <person name="Saito K."/>
            <person name="Kawai Y."/>
            <person name="Isono Y."/>
            <person name="Nakamura Y."/>
            <person name="Nagahari K."/>
            <person name="Murakami K."/>
            <person name="Yasuda T."/>
            <person name="Iwayanagi T."/>
            <person name="Wagatsuma M."/>
            <person name="Shiratori A."/>
            <person name="Sudo H."/>
            <person name="Hosoiri T."/>
            <person name="Kaku Y."/>
            <person name="Kodaira H."/>
            <person name="Kondo H."/>
            <person name="Sugawara M."/>
            <person name="Takahashi M."/>
            <person name="Kanda K."/>
            <person name="Yokoi T."/>
            <person name="Furuya T."/>
            <person name="Kikkawa E."/>
            <person name="Omura Y."/>
            <person name="Abe K."/>
            <person name="Kamihara K."/>
            <person name="Katsuta N."/>
            <person name="Sato K."/>
            <person name="Tanikawa M."/>
            <person name="Yamazaki M."/>
            <person name="Ninomiya K."/>
            <person name="Ishibashi T."/>
            <person name="Yamashita H."/>
            <person name="Murakawa K."/>
            <person name="Fujimori K."/>
            <person name="Tanai H."/>
            <person name="Kimata M."/>
            <person name="Watanabe M."/>
            <person name="Hiraoka S."/>
            <person name="Chiba Y."/>
            <person name="Ishida S."/>
            <person name="Ono Y."/>
            <person name="Takiguchi S."/>
            <person name="Watanabe S."/>
            <person name="Yosida M."/>
            <person name="Hotuta T."/>
            <person name="Kusano J."/>
            <person name="Kanehori K."/>
            <person name="Takahashi-Fujii A."/>
            <person name="Hara H."/>
            <person name="Tanase T.-O."/>
            <person name="Nomura Y."/>
            <person name="Togiya S."/>
            <person name="Komai F."/>
            <person name="Hara R."/>
            <person name="Takeuchi K."/>
            <person name="Arita M."/>
            <person name="Imose N."/>
            <person name="Musashino K."/>
            <person name="Yuuki H."/>
            <person name="Oshima A."/>
            <person name="Sasaki N."/>
            <person name="Aotsuka S."/>
            <person name="Yoshikawa Y."/>
            <person name="Matsunawa H."/>
            <person name="Ichihara T."/>
            <person name="Shiohata N."/>
            <person name="Sano S."/>
            <person name="Moriya S."/>
            <person name="Momiyama H."/>
            <person name="Satoh N."/>
            <person name="Takami S."/>
            <person name="Terashima Y."/>
            <person name="Suzuki O."/>
            <person name="Nakagawa S."/>
            <person name="Senoh A."/>
            <person name="Mizoguchi H."/>
            <person name="Goto Y."/>
            <person name="Shimizu F."/>
            <person name="Wakebe H."/>
            <person name="Hishigaki H."/>
            <person name="Watanabe T."/>
            <person name="Sugiyama A."/>
            <person name="Takemoto M."/>
            <person name="Kawakami B."/>
            <person name="Yamazaki M."/>
            <person name="Watanabe K."/>
            <person name="Kumagai A."/>
            <person name="Itakura S."/>
            <person name="Fukuzumi Y."/>
            <person name="Fujimori Y."/>
            <person name="Komiyama M."/>
            <person name="Tashiro H."/>
            <person name="Tanigami A."/>
            <person name="Fujiwara T."/>
            <person name="Ono T."/>
            <person name="Yamada K."/>
            <person name="Fujii Y."/>
            <person name="Ozaki K."/>
            <person name="Hirao M."/>
            <person name="Ohmori Y."/>
            <person name="Kawabata A."/>
            <person name="Hikiji T."/>
            <person name="Kobatake N."/>
            <person name="Inagaki H."/>
            <person name="Ikema Y."/>
            <person name="Okamoto S."/>
            <person name="Okitani R."/>
            <person name="Kawakami T."/>
            <person name="Noguchi S."/>
            <person name="Itoh T."/>
            <person name="Shigeta K."/>
            <person name="Senba T."/>
            <person name="Matsumura K."/>
            <person name="Nakajima Y."/>
            <person name="Mizuno T."/>
            <person name="Morinaga M."/>
            <person name="Sasaki M."/>
            <person name="Togashi T."/>
            <person name="Oyama M."/>
            <person name="Hata H."/>
            <person name="Watanabe M."/>
            <person name="Komatsu T."/>
            <person name="Mizushima-Sugano J."/>
            <person name="Satoh T."/>
            <person name="Shirai Y."/>
            <person name="Takahashi Y."/>
            <person name="Nakagawa K."/>
            <person name="Okumura K."/>
            <person name="Nagase T."/>
            <person name="Nomura N."/>
            <person name="Kikuchi H."/>
            <person name="Masuho Y."/>
            <person name="Yamashita R."/>
            <person name="Nakai K."/>
            <person name="Yada T."/>
            <person name="Nakamura Y."/>
            <person name="Ohara O."/>
            <person name="Isogai T."/>
            <person name="Sugano S."/>
        </authorList>
    </citation>
    <scope>NUCLEOTIDE SEQUENCE [LARGE SCALE MRNA]</scope>
    <source>
        <tissue>Synovium</tissue>
    </source>
</reference>
<reference key="2">
    <citation type="journal article" date="2005" name="Nature">
        <title>DNA sequence and analysis of human chromosome 18.</title>
        <authorList>
            <person name="Nusbaum C."/>
            <person name="Zody M.C."/>
            <person name="Borowsky M.L."/>
            <person name="Kamal M."/>
            <person name="Kodira C.D."/>
            <person name="Taylor T.D."/>
            <person name="Whittaker C.A."/>
            <person name="Chang J.L."/>
            <person name="Cuomo C.A."/>
            <person name="Dewar K."/>
            <person name="FitzGerald M.G."/>
            <person name="Yang X."/>
            <person name="Abouelleil A."/>
            <person name="Allen N.R."/>
            <person name="Anderson S."/>
            <person name="Bloom T."/>
            <person name="Bugalter B."/>
            <person name="Butler J."/>
            <person name="Cook A."/>
            <person name="DeCaprio D."/>
            <person name="Engels R."/>
            <person name="Garber M."/>
            <person name="Gnirke A."/>
            <person name="Hafez N."/>
            <person name="Hall J.L."/>
            <person name="Norman C.H."/>
            <person name="Itoh T."/>
            <person name="Jaffe D.B."/>
            <person name="Kuroki Y."/>
            <person name="Lehoczky J."/>
            <person name="Lui A."/>
            <person name="Macdonald P."/>
            <person name="Mauceli E."/>
            <person name="Mikkelsen T.S."/>
            <person name="Naylor J.W."/>
            <person name="Nicol R."/>
            <person name="Nguyen C."/>
            <person name="Noguchi H."/>
            <person name="O'Leary S.B."/>
            <person name="Piqani B."/>
            <person name="Smith C.L."/>
            <person name="Talamas J.A."/>
            <person name="Topham K."/>
            <person name="Totoki Y."/>
            <person name="Toyoda A."/>
            <person name="Wain H.M."/>
            <person name="Young S.K."/>
            <person name="Zeng Q."/>
            <person name="Zimmer A.R."/>
            <person name="Fujiyama A."/>
            <person name="Hattori M."/>
            <person name="Birren B.W."/>
            <person name="Sakaki Y."/>
            <person name="Lander E.S."/>
        </authorList>
    </citation>
    <scope>NUCLEOTIDE SEQUENCE [LARGE SCALE GENOMIC DNA]</scope>
</reference>
<reference key="3">
    <citation type="journal article" date="2004" name="Genome Res.">
        <title>The status, quality, and expansion of the NIH full-length cDNA project: the Mammalian Gene Collection (MGC).</title>
        <authorList>
            <consortium name="The MGC Project Team"/>
        </authorList>
    </citation>
    <scope>NUCLEOTIDE SEQUENCE [LARGE SCALE MRNA]</scope>
    <source>
        <tissue>Lung</tissue>
    </source>
</reference>
<reference key="4">
    <citation type="submission" date="1999-04" db="EMBL/GenBank/DDBJ databases">
        <title>Identification of colon-cancer associated sequences by SSH.</title>
        <authorList>
            <person name="Linnebacher M."/>
            <person name="Meuer S.C."/>
            <person name="Rudy W."/>
        </authorList>
    </citation>
    <scope>NUCLEOTIDE SEQUENCE [MRNA] OF 35-657</scope>
    <source>
        <tissue>Colon carcinoma</tissue>
    </source>
</reference>
<reference key="5">
    <citation type="journal article" date="2007" name="Traffic">
        <title>Integral and associated lysosomal membrane proteins.</title>
        <authorList>
            <person name="Schroeder B."/>
            <person name="Wrocklage C."/>
            <person name="Pan C."/>
            <person name="Jaeger R."/>
            <person name="Koesters B."/>
            <person name="Schaefer H."/>
            <person name="Elsaesser H.-P."/>
            <person name="Mann M."/>
            <person name="Hasilik A."/>
        </authorList>
    </citation>
    <scope>SUBCELLULAR LOCATION [LARGE SCALE ANALYSIS]</scope>
</reference>
<reference key="6">
    <citation type="journal article" date="2013" name="J. Proteome Res.">
        <title>Toward a comprehensive characterization of a human cancer cell phosphoproteome.</title>
        <authorList>
            <person name="Zhou H."/>
            <person name="Di Palma S."/>
            <person name="Preisinger C."/>
            <person name="Peng M."/>
            <person name="Polat A.N."/>
            <person name="Heck A.J."/>
            <person name="Mohammed S."/>
        </authorList>
    </citation>
    <scope>IDENTIFICATION BY MASS SPECTROMETRY [LARGE SCALE ANALYSIS]</scope>
    <source>
        <tissue>Erythroleukemia</tissue>
    </source>
</reference>
<reference key="7">
    <citation type="journal article" date="2017" name="Mol. Cell. Biol.">
        <title>Systematic analysis of human cells lacking ATG8 proteins uncovers roles for GABARAPs and the CCZ1/MON1 regulator C18orf8/RMC1 in macro and selective autophagic flux.</title>
        <authorList>
            <person name="Pontano Vaites L."/>
            <person name="Paulo J.A."/>
            <person name="Huttlin E.L."/>
            <person name="Harper J.W."/>
        </authorList>
    </citation>
    <scope>IDENTIFICATION BY MASS SPECTROMETRY</scope>
    <scope>IDENTIFICATION IN A COMPLEX WITH RMC1; CCZ1; MON1A AND MON1B</scope>
    <scope>SUBCELLULAR LOCATION</scope>
    <scope>FUNCTION</scope>
</reference>
<proteinExistence type="evidence at protein level"/>
<comment type="function">
    <text evidence="2">Component of the CCZ1-MON1 RAB7A guanine exchange factor (GEF). Acts as a positive regulator of CCZ1-MON1A/B function necessary for endosomal/autophagic flux and efficient RAB7A localization (PubMed:29038162).</text>
</comment>
<comment type="subunit">
    <text evidence="2">Found in a complex with RMC1, CCZ1 MON1A and MON1B.</text>
</comment>
<comment type="interaction">
    <interactant intactId="EBI-2804848">
        <id>Q96DM3</id>
    </interactant>
    <interactant intactId="EBI-6660701">
        <id>Q96A22</id>
        <label>C11orf52</label>
    </interactant>
    <organismsDiffer>false</organismsDiffer>
    <experiments>3</experiments>
</comment>
<comment type="subcellular location">
    <subcellularLocation>
        <location evidence="1">Lysosome membrane</location>
    </subcellularLocation>
    <subcellularLocation>
        <location evidence="2">Late endosome membrane</location>
    </subcellularLocation>
</comment>
<comment type="similarity">
    <text evidence="4">Belongs to the RMC1 family.</text>
</comment>
<comment type="sequence caution" evidence="4">
    <conflict type="erroneous initiation">
        <sequence resource="EMBL-CDS" id="AAD33909"/>
    </conflict>
</comment>
<protein>
    <recommendedName>
        <fullName evidence="3">Regulator of MON1-CCZ1 complex</fullName>
    </recommendedName>
    <alternativeName>
        <fullName>Colon cancer-associated protein Mic1</fullName>
        <shortName>Mic-1</shortName>
    </alternativeName>
    <alternativeName>
        <fullName evidence="4">WD repeat-containing protein 98</fullName>
    </alternativeName>
</protein>
<dbReference type="EMBL" id="AK057192">
    <property type="protein sequence ID" value="BAB71377.1"/>
    <property type="molecule type" value="mRNA"/>
</dbReference>
<dbReference type="EMBL" id="BC002950">
    <property type="protein sequence ID" value="AAH02950.2"/>
    <property type="molecule type" value="mRNA"/>
</dbReference>
<dbReference type="EMBL" id="BC008305">
    <property type="protein sequence ID" value="AAH08305.2"/>
    <property type="molecule type" value="mRNA"/>
</dbReference>
<dbReference type="EMBL" id="AF143536">
    <property type="protein sequence ID" value="AAD33909.1"/>
    <property type="status" value="ALT_INIT"/>
    <property type="molecule type" value="mRNA"/>
</dbReference>
<dbReference type="EMBL" id="AC010853">
    <property type="status" value="NOT_ANNOTATED_CDS"/>
    <property type="molecule type" value="Genomic_DNA"/>
</dbReference>
<dbReference type="EMBL" id="AC026634">
    <property type="status" value="NOT_ANNOTATED_CDS"/>
    <property type="molecule type" value="Genomic_DNA"/>
</dbReference>
<dbReference type="CCDS" id="CCDS32803.1"/>
<dbReference type="RefSeq" id="NP_001305636.1">
    <property type="nucleotide sequence ID" value="NM_001318707.1"/>
</dbReference>
<dbReference type="RefSeq" id="NP_001305637.1">
    <property type="nucleotide sequence ID" value="NM_001318708.1"/>
</dbReference>
<dbReference type="RefSeq" id="NP_001305638.1">
    <property type="nucleotide sequence ID" value="NM_001318709.1"/>
</dbReference>
<dbReference type="RefSeq" id="NP_037458.3">
    <property type="nucleotide sequence ID" value="NM_013326.4"/>
</dbReference>
<dbReference type="SMR" id="Q96DM3"/>
<dbReference type="BioGRID" id="118961">
    <property type="interactions" value="144"/>
</dbReference>
<dbReference type="ComplexPortal" id="CPX-8152">
    <property type="entry name" value="MON1-CCZ1 guanyl-nucleotide exchange factor complex, MON1B variant"/>
</dbReference>
<dbReference type="ComplexPortal" id="CPX-8153">
    <property type="entry name" value="MON1-CCZ1 guanyl-nucleotide exchange factor complex, MON1A variant"/>
</dbReference>
<dbReference type="ComplexPortal" id="CPX-8165">
    <property type="entry name" value="MON1-CCZ1B guanyl-nucleotide exchange factor complex, MON1A variant"/>
</dbReference>
<dbReference type="ComplexPortal" id="CPX-8166">
    <property type="entry name" value="MON1-CCZ1B guanyl-nucleotide exchange factor complex, MON1B variant"/>
</dbReference>
<dbReference type="CORUM" id="Q96DM3"/>
<dbReference type="FunCoup" id="Q96DM3">
    <property type="interactions" value="2018"/>
</dbReference>
<dbReference type="IntAct" id="Q96DM3">
    <property type="interactions" value="131"/>
</dbReference>
<dbReference type="MINT" id="Q96DM3"/>
<dbReference type="STRING" id="9606.ENSP00000269221"/>
<dbReference type="iPTMnet" id="Q96DM3"/>
<dbReference type="PhosphoSitePlus" id="Q96DM3"/>
<dbReference type="BioMuta" id="C18orf8"/>
<dbReference type="DMDM" id="47605918"/>
<dbReference type="jPOST" id="Q96DM3"/>
<dbReference type="MassIVE" id="Q96DM3"/>
<dbReference type="PaxDb" id="9606-ENSP00000269221"/>
<dbReference type="PeptideAtlas" id="Q96DM3"/>
<dbReference type="ProteomicsDB" id="76295"/>
<dbReference type="Pumba" id="Q96DM3"/>
<dbReference type="Antibodypedia" id="22041">
    <property type="antibodies" value="216 antibodies from 31 providers"/>
</dbReference>
<dbReference type="DNASU" id="29919"/>
<dbReference type="Ensembl" id="ENST00000269221.8">
    <property type="protein sequence ID" value="ENSP00000269221.2"/>
    <property type="gene ID" value="ENSG00000141452.11"/>
</dbReference>
<dbReference type="GeneID" id="29919"/>
<dbReference type="KEGG" id="hsa:29919"/>
<dbReference type="MANE-Select" id="ENST00000269221.8">
    <property type="protein sequence ID" value="ENSP00000269221.2"/>
    <property type="RefSeq nucleotide sequence ID" value="NM_013326.5"/>
    <property type="RefSeq protein sequence ID" value="NP_037458.3"/>
</dbReference>
<dbReference type="UCSC" id="uc021uie.3">
    <property type="organism name" value="human"/>
</dbReference>
<dbReference type="AGR" id="HGNC:24326"/>
<dbReference type="CTD" id="29919"/>
<dbReference type="DisGeNET" id="29919"/>
<dbReference type="GeneCards" id="RMC1"/>
<dbReference type="HGNC" id="HGNC:24326">
    <property type="gene designation" value="RMC1"/>
</dbReference>
<dbReference type="HPA" id="ENSG00000141452">
    <property type="expression patterns" value="Low tissue specificity"/>
</dbReference>
<dbReference type="MIM" id="620267">
    <property type="type" value="gene"/>
</dbReference>
<dbReference type="neXtProt" id="NX_Q96DM3"/>
<dbReference type="OpenTargets" id="ENSG00000141452"/>
<dbReference type="PharmGKB" id="PA134862561"/>
<dbReference type="VEuPathDB" id="HostDB:ENSG00000141452"/>
<dbReference type="eggNOG" id="KOG2377">
    <property type="taxonomic scope" value="Eukaryota"/>
</dbReference>
<dbReference type="GeneTree" id="ENSGT00390000009127"/>
<dbReference type="InParanoid" id="Q96DM3"/>
<dbReference type="OMA" id="VWVHNRE"/>
<dbReference type="OrthoDB" id="26384at2759"/>
<dbReference type="PAN-GO" id="Q96DM3">
    <property type="GO annotations" value="3 GO annotations based on evolutionary models"/>
</dbReference>
<dbReference type="PhylomeDB" id="Q96DM3"/>
<dbReference type="TreeFam" id="TF105850"/>
<dbReference type="PathwayCommons" id="Q96DM3"/>
<dbReference type="SignaLink" id="Q96DM3"/>
<dbReference type="BioGRID-ORCS" id="29919">
    <property type="hits" value="37 hits in 1144 CRISPR screens"/>
</dbReference>
<dbReference type="ChiTaRS" id="C18orf8">
    <property type="organism name" value="human"/>
</dbReference>
<dbReference type="GenomeRNAi" id="29919"/>
<dbReference type="Pharos" id="Q96DM3">
    <property type="development level" value="Tbio"/>
</dbReference>
<dbReference type="PRO" id="PR:Q96DM3"/>
<dbReference type="Proteomes" id="UP000005640">
    <property type="component" value="Chromosome 18"/>
</dbReference>
<dbReference type="RNAct" id="Q96DM3">
    <property type="molecule type" value="protein"/>
</dbReference>
<dbReference type="Bgee" id="ENSG00000141452">
    <property type="expression patterns" value="Expressed in secondary oocyte and 183 other cell types or tissues"/>
</dbReference>
<dbReference type="ExpressionAtlas" id="Q96DM3">
    <property type="expression patterns" value="baseline and differential"/>
</dbReference>
<dbReference type="GO" id="GO:0031902">
    <property type="term" value="C:late endosome membrane"/>
    <property type="evidence" value="ECO:0000314"/>
    <property type="project" value="UniProtKB"/>
</dbReference>
<dbReference type="GO" id="GO:0005765">
    <property type="term" value="C:lysosomal membrane"/>
    <property type="evidence" value="ECO:0007005"/>
    <property type="project" value="UniProtKB"/>
</dbReference>
<dbReference type="GO" id="GO:0035658">
    <property type="term" value="C:Mon1-Ccz1 complex"/>
    <property type="evidence" value="ECO:0000314"/>
    <property type="project" value="UniProtKB"/>
</dbReference>
<dbReference type="GO" id="GO:0006914">
    <property type="term" value="P:autophagy"/>
    <property type="evidence" value="ECO:0007669"/>
    <property type="project" value="UniProtKB-KW"/>
</dbReference>
<dbReference type="GO" id="GO:0010506">
    <property type="term" value="P:regulation of autophagy"/>
    <property type="evidence" value="ECO:0000315"/>
    <property type="project" value="UniProtKB"/>
</dbReference>
<dbReference type="FunFam" id="2.130.10.10:FF:000436">
    <property type="entry name" value="Regulator of MON1-CCZ1 complex"/>
    <property type="match status" value="1"/>
</dbReference>
<dbReference type="Gene3D" id="2.130.10.10">
    <property type="entry name" value="YVTN repeat-like/Quinoprotein amine dehydrogenase"/>
    <property type="match status" value="1"/>
</dbReference>
<dbReference type="InterPro" id="IPR040371">
    <property type="entry name" value="RMC1"/>
</dbReference>
<dbReference type="InterPro" id="IPR009755">
    <property type="entry name" value="RMC1_C"/>
</dbReference>
<dbReference type="InterPro" id="IPR049040">
    <property type="entry name" value="RMC1_N"/>
</dbReference>
<dbReference type="InterPro" id="IPR015943">
    <property type="entry name" value="WD40/YVTN_repeat-like_dom_sf"/>
</dbReference>
<dbReference type="InterPro" id="IPR036322">
    <property type="entry name" value="WD40_repeat_dom_sf"/>
</dbReference>
<dbReference type="PANTHER" id="PTHR12897">
    <property type="entry name" value="COLON CANCER-ASSOCIATED PROTEIN MIC1"/>
    <property type="match status" value="1"/>
</dbReference>
<dbReference type="PANTHER" id="PTHR12897:SF4">
    <property type="entry name" value="REGULATOR OF MON1-CCZ1 COMPLEX"/>
    <property type="match status" value="1"/>
</dbReference>
<dbReference type="Pfam" id="PF07035">
    <property type="entry name" value="RMC1_C"/>
    <property type="match status" value="1"/>
</dbReference>
<dbReference type="Pfam" id="PF21029">
    <property type="entry name" value="RMC1_N"/>
    <property type="match status" value="1"/>
</dbReference>
<dbReference type="SUPFAM" id="SSF50978">
    <property type="entry name" value="WD40 repeat-like"/>
    <property type="match status" value="1"/>
</dbReference>
<gene>
    <name evidence="5" type="primary">RMC1</name>
    <name type="synonym">C18orf8</name>
    <name type="synonym">MIC1</name>
    <name type="synonym">WDR98</name>
</gene>
<accession>Q96DM3</accession>
<accession>Q9BU17</accession>
<accession>Q9Y5M0</accession>
<feature type="chain" id="PRO_0000096481" description="Regulator of MON1-CCZ1 complex">
    <location>
        <begin position="1"/>
        <end position="657"/>
    </location>
</feature>
<feature type="domain" description="Mic1">
    <location>
        <begin position="471"/>
        <end position="637"/>
    </location>
</feature>
<feature type="sequence conflict" description="In Ref. 1; BAB71377." evidence="4" ref="1">
    <original>S</original>
    <variation>R</variation>
    <location>
        <position position="163"/>
    </location>
</feature>
<feature type="sequence conflict" description="In Ref. 4; AAD33909." evidence="4" ref="4">
    <original>Q</original>
    <variation>L</variation>
    <location>
        <position position="178"/>
    </location>
</feature>
<feature type="sequence conflict" description="In Ref. 4; AAD33909." evidence="4" ref="4">
    <original>E</original>
    <variation>DFFLYGVFKHYRQ</variation>
    <location>
        <position position="470"/>
    </location>
</feature>
<keyword id="KW-0072">Autophagy</keyword>
<keyword id="KW-0967">Endosome</keyword>
<keyword id="KW-0458">Lysosome</keyword>
<keyword id="KW-0472">Membrane</keyword>
<keyword id="KW-1267">Proteomics identification</keyword>
<keyword id="KW-1185">Reference proteome</keyword>